<accession>Q0RAW2</accession>
<keyword id="KW-0535">Nitrogen fixation</keyword>
<keyword id="KW-1185">Reference proteome</keyword>
<name>NIFW_FRAAA</name>
<organism>
    <name type="scientific">Frankia alni (strain DSM 45986 / CECT 9034 / ACN14a)</name>
    <dbReference type="NCBI Taxonomy" id="326424"/>
    <lineage>
        <taxon>Bacteria</taxon>
        <taxon>Bacillati</taxon>
        <taxon>Actinomycetota</taxon>
        <taxon>Actinomycetes</taxon>
        <taxon>Frankiales</taxon>
        <taxon>Frankiaceae</taxon>
        <taxon>Frankia</taxon>
    </lineage>
</organism>
<proteinExistence type="inferred from homology"/>
<gene>
    <name evidence="1" type="primary">nifW</name>
    <name type="ordered locus">FRAAL6805</name>
</gene>
<protein>
    <recommendedName>
        <fullName evidence="1">Nitrogenase-stabilizing/protective protein NifW</fullName>
    </recommendedName>
</protein>
<comment type="function">
    <text evidence="1">May protect the nitrogenase Fe-Mo protein from oxidative damage.</text>
</comment>
<comment type="subunit">
    <text evidence="1">Homotrimer; associates with NifD.</text>
</comment>
<comment type="similarity">
    <text evidence="1">Belongs to the NifW family.</text>
</comment>
<feature type="chain" id="PRO_1000060968" description="Nitrogenase-stabilizing/protective protein NifW">
    <location>
        <begin position="1"/>
        <end position="131"/>
    </location>
</feature>
<sequence>MSATTDAGQLAAFHRCSTAEEYFTLLEVDYDPRVVAVNRLHILKHFAGELAKLPEAGADAANPRHLLHDYRDALVRSYEAFTNATALDHRLFKVLKDRAPKSAFVPASEITVERLGSTQPSETSEQTEEAR</sequence>
<reference key="1">
    <citation type="journal article" date="2007" name="Genome Res.">
        <title>Genome characteristics of facultatively symbiotic Frankia sp. strains reflect host range and host plant biogeography.</title>
        <authorList>
            <person name="Normand P."/>
            <person name="Lapierre P."/>
            <person name="Tisa L.S."/>
            <person name="Gogarten J.P."/>
            <person name="Alloisio N."/>
            <person name="Bagnarol E."/>
            <person name="Bassi C.A."/>
            <person name="Berry A.M."/>
            <person name="Bickhart D.M."/>
            <person name="Choisne N."/>
            <person name="Couloux A."/>
            <person name="Cournoyer B."/>
            <person name="Cruveiller S."/>
            <person name="Daubin V."/>
            <person name="Demange N."/>
            <person name="Francino M.P."/>
            <person name="Goltsman E."/>
            <person name="Huang Y."/>
            <person name="Kopp O.R."/>
            <person name="Labarre L."/>
            <person name="Lapidus A."/>
            <person name="Lavire C."/>
            <person name="Marechal J."/>
            <person name="Martinez M."/>
            <person name="Mastronunzio J.E."/>
            <person name="Mullin B.C."/>
            <person name="Niemann J."/>
            <person name="Pujic P."/>
            <person name="Rawnsley T."/>
            <person name="Rouy Z."/>
            <person name="Schenowitz C."/>
            <person name="Sellstedt A."/>
            <person name="Tavares F."/>
            <person name="Tomkins J.P."/>
            <person name="Vallenet D."/>
            <person name="Valverde C."/>
            <person name="Wall L.G."/>
            <person name="Wang Y."/>
            <person name="Medigue C."/>
            <person name="Benson D.R."/>
        </authorList>
    </citation>
    <scope>NUCLEOTIDE SEQUENCE [LARGE SCALE GENOMIC DNA]</scope>
    <source>
        <strain>DSM 45986 / CECT 9034 / ACN14a</strain>
    </source>
</reference>
<dbReference type="EMBL" id="CT573213">
    <property type="protein sequence ID" value="CAJ65428.1"/>
    <property type="molecule type" value="Genomic_DNA"/>
</dbReference>
<dbReference type="RefSeq" id="WP_011607839.1">
    <property type="nucleotide sequence ID" value="NC_008278.1"/>
</dbReference>
<dbReference type="SMR" id="Q0RAW2"/>
<dbReference type="STRING" id="326424.FRAAL6805"/>
<dbReference type="KEGG" id="fal:FRAAL6805"/>
<dbReference type="HOGENOM" id="CLU_145318_1_0_11"/>
<dbReference type="OrthoDB" id="9811868at2"/>
<dbReference type="Proteomes" id="UP000000657">
    <property type="component" value="Chromosome"/>
</dbReference>
<dbReference type="GO" id="GO:0009399">
    <property type="term" value="P:nitrogen fixation"/>
    <property type="evidence" value="ECO:0007669"/>
    <property type="project" value="UniProtKB-UniRule"/>
</dbReference>
<dbReference type="HAMAP" id="MF_00529">
    <property type="entry name" value="NifW"/>
    <property type="match status" value="1"/>
</dbReference>
<dbReference type="InterPro" id="IPR004893">
    <property type="entry name" value="NifW"/>
</dbReference>
<dbReference type="Pfam" id="PF03206">
    <property type="entry name" value="NifW"/>
    <property type="match status" value="1"/>
</dbReference>
<dbReference type="PIRSF" id="PIRSF005790">
    <property type="entry name" value="NifW"/>
    <property type="match status" value="1"/>
</dbReference>
<evidence type="ECO:0000255" key="1">
    <source>
        <dbReference type="HAMAP-Rule" id="MF_00529"/>
    </source>
</evidence>